<feature type="chain" id="PRO_0000164204" description="Probable multidrug resistance protein NorM">
    <location>
        <begin position="1"/>
        <end position="452"/>
    </location>
</feature>
<feature type="transmembrane region" description="Helical" evidence="2">
    <location>
        <begin position="14"/>
        <end position="34"/>
    </location>
</feature>
<feature type="transmembrane region" description="Helical" evidence="2">
    <location>
        <begin position="56"/>
        <end position="76"/>
    </location>
</feature>
<feature type="transmembrane region" description="Helical" evidence="2">
    <location>
        <begin position="97"/>
        <end position="117"/>
    </location>
</feature>
<feature type="transmembrane region" description="Helical" evidence="2">
    <location>
        <begin position="129"/>
        <end position="149"/>
    </location>
</feature>
<feature type="transmembrane region" description="Helical" evidence="2">
    <location>
        <begin position="164"/>
        <end position="184"/>
    </location>
</feature>
<feature type="transmembrane region" description="Helical" evidence="2">
    <location>
        <begin position="195"/>
        <end position="215"/>
    </location>
</feature>
<feature type="transmembrane region" description="Helical" evidence="2">
    <location>
        <begin position="244"/>
        <end position="264"/>
    </location>
</feature>
<feature type="transmembrane region" description="Helical" evidence="2">
    <location>
        <begin position="284"/>
        <end position="304"/>
    </location>
</feature>
<feature type="transmembrane region" description="Helical" evidence="2">
    <location>
        <begin position="319"/>
        <end position="339"/>
    </location>
</feature>
<feature type="transmembrane region" description="Helical" evidence="2">
    <location>
        <begin position="360"/>
        <end position="380"/>
    </location>
</feature>
<feature type="transmembrane region" description="Helical" evidence="2">
    <location>
        <begin position="392"/>
        <end position="412"/>
    </location>
</feature>
<feature type="transmembrane region" description="Helical" evidence="2">
    <location>
        <begin position="417"/>
        <end position="437"/>
    </location>
</feature>
<proteinExistence type="inferred from homology"/>
<sequence length="452" mass="49254">MKETQNAREKIKQLLHILIPIFITQAGLSLITFLDTVMSGKVSPADLAGVAIGSSLWTPVYTGLAGILMAVTPIVAQLLGAEKKQKIPFTVLQAVYVAALLSIAVLVIGYAAVDLILGRLNLDIHVHQIAKHFLGFLSLGIFPLFVYTVLRSFIDSLGKTRVTMMITLSSLPINFVLNYVFIFGKFGMPALGGVGAGLASALTYWCICIISFFIIHKNAPFSEYGIFLTMYKFSWKACKNLLKIGLPIGFAVFFETSIFAAVTLLMSHFHTVTIASHQAAMNFASLLYMLPLSVSMALTIVVGFEAGAARFKDARSYSLIGIMMAIGFSLFTAACILLFREQIAGMYTSDPDVLRLTQHFLIYALFFQLSDAVAAPIQGALRGYKDVNYTLAAAFVSYWVIGLPVGYMVGTFTSLGAFGYWIGLIAGLAAGAVGLFFRLAKLQKRYSQKQHI</sequence>
<name>NORM_BACSU</name>
<evidence type="ECO:0000250" key="1"/>
<evidence type="ECO:0000255" key="2"/>
<evidence type="ECO:0000305" key="3"/>
<reference key="1">
    <citation type="journal article" date="1998" name="DNA Res.">
        <title>Sequence analysis of the Bacillus subtilis 168 chromosome region between the sspC and odhA loci (184 degrees-180 degrees).</title>
        <authorList>
            <person name="Ghim S.-Y."/>
            <person name="Choi S.-K."/>
            <person name="Shin B.-S."/>
            <person name="Jeong Y.-M."/>
            <person name="Sorokin A."/>
            <person name="Ehrlich S.D."/>
            <person name="Park S.-H."/>
        </authorList>
    </citation>
    <scope>NUCLEOTIDE SEQUENCE [GENOMIC DNA]</scope>
    <source>
        <strain>168</strain>
    </source>
</reference>
<reference key="2">
    <citation type="journal article" date="1997" name="Nature">
        <title>The complete genome sequence of the Gram-positive bacterium Bacillus subtilis.</title>
        <authorList>
            <person name="Kunst F."/>
            <person name="Ogasawara N."/>
            <person name="Moszer I."/>
            <person name="Albertini A.M."/>
            <person name="Alloni G."/>
            <person name="Azevedo V."/>
            <person name="Bertero M.G."/>
            <person name="Bessieres P."/>
            <person name="Bolotin A."/>
            <person name="Borchert S."/>
            <person name="Borriss R."/>
            <person name="Boursier L."/>
            <person name="Brans A."/>
            <person name="Braun M."/>
            <person name="Brignell S.C."/>
            <person name="Bron S."/>
            <person name="Brouillet S."/>
            <person name="Bruschi C.V."/>
            <person name="Caldwell B."/>
            <person name="Capuano V."/>
            <person name="Carter N.M."/>
            <person name="Choi S.-K."/>
            <person name="Codani J.-J."/>
            <person name="Connerton I.F."/>
            <person name="Cummings N.J."/>
            <person name="Daniel R.A."/>
            <person name="Denizot F."/>
            <person name="Devine K.M."/>
            <person name="Duesterhoeft A."/>
            <person name="Ehrlich S.D."/>
            <person name="Emmerson P.T."/>
            <person name="Entian K.-D."/>
            <person name="Errington J."/>
            <person name="Fabret C."/>
            <person name="Ferrari E."/>
            <person name="Foulger D."/>
            <person name="Fritz C."/>
            <person name="Fujita M."/>
            <person name="Fujita Y."/>
            <person name="Fuma S."/>
            <person name="Galizzi A."/>
            <person name="Galleron N."/>
            <person name="Ghim S.-Y."/>
            <person name="Glaser P."/>
            <person name="Goffeau A."/>
            <person name="Golightly E.J."/>
            <person name="Grandi G."/>
            <person name="Guiseppi G."/>
            <person name="Guy B.J."/>
            <person name="Haga K."/>
            <person name="Haiech J."/>
            <person name="Harwood C.R."/>
            <person name="Henaut A."/>
            <person name="Hilbert H."/>
            <person name="Holsappel S."/>
            <person name="Hosono S."/>
            <person name="Hullo M.-F."/>
            <person name="Itaya M."/>
            <person name="Jones L.-M."/>
            <person name="Joris B."/>
            <person name="Karamata D."/>
            <person name="Kasahara Y."/>
            <person name="Klaerr-Blanchard M."/>
            <person name="Klein C."/>
            <person name="Kobayashi Y."/>
            <person name="Koetter P."/>
            <person name="Koningstein G."/>
            <person name="Krogh S."/>
            <person name="Kumano M."/>
            <person name="Kurita K."/>
            <person name="Lapidus A."/>
            <person name="Lardinois S."/>
            <person name="Lauber J."/>
            <person name="Lazarevic V."/>
            <person name="Lee S.-M."/>
            <person name="Levine A."/>
            <person name="Liu H."/>
            <person name="Masuda S."/>
            <person name="Mauel C."/>
            <person name="Medigue C."/>
            <person name="Medina N."/>
            <person name="Mellado R.P."/>
            <person name="Mizuno M."/>
            <person name="Moestl D."/>
            <person name="Nakai S."/>
            <person name="Noback M."/>
            <person name="Noone D."/>
            <person name="O'Reilly M."/>
            <person name="Ogawa K."/>
            <person name="Ogiwara A."/>
            <person name="Oudega B."/>
            <person name="Park S.-H."/>
            <person name="Parro V."/>
            <person name="Pohl T.M."/>
            <person name="Portetelle D."/>
            <person name="Porwollik S."/>
            <person name="Prescott A.M."/>
            <person name="Presecan E."/>
            <person name="Pujic P."/>
            <person name="Purnelle B."/>
            <person name="Rapoport G."/>
            <person name="Rey M."/>
            <person name="Reynolds S."/>
            <person name="Rieger M."/>
            <person name="Rivolta C."/>
            <person name="Rocha E."/>
            <person name="Roche B."/>
            <person name="Rose M."/>
            <person name="Sadaie Y."/>
            <person name="Sato T."/>
            <person name="Scanlan E."/>
            <person name="Schleich S."/>
            <person name="Schroeter R."/>
            <person name="Scoffone F."/>
            <person name="Sekiguchi J."/>
            <person name="Sekowska A."/>
            <person name="Seror S.J."/>
            <person name="Serror P."/>
            <person name="Shin B.-S."/>
            <person name="Soldo B."/>
            <person name="Sorokin A."/>
            <person name="Tacconi E."/>
            <person name="Takagi T."/>
            <person name="Takahashi H."/>
            <person name="Takemaru K."/>
            <person name="Takeuchi M."/>
            <person name="Tamakoshi A."/>
            <person name="Tanaka T."/>
            <person name="Terpstra P."/>
            <person name="Tognoni A."/>
            <person name="Tosato V."/>
            <person name="Uchiyama S."/>
            <person name="Vandenbol M."/>
            <person name="Vannier F."/>
            <person name="Vassarotti A."/>
            <person name="Viari A."/>
            <person name="Wambutt R."/>
            <person name="Wedler E."/>
            <person name="Wedler H."/>
            <person name="Weitzenegger T."/>
            <person name="Winters P."/>
            <person name="Wipat A."/>
            <person name="Yamamoto H."/>
            <person name="Yamane K."/>
            <person name="Yasumoto K."/>
            <person name="Yata K."/>
            <person name="Yoshida K."/>
            <person name="Yoshikawa H.-F."/>
            <person name="Zumstein E."/>
            <person name="Yoshikawa H."/>
            <person name="Danchin A."/>
        </authorList>
    </citation>
    <scope>NUCLEOTIDE SEQUENCE [LARGE SCALE GENOMIC DNA]</scope>
    <source>
        <strain>168</strain>
    </source>
</reference>
<comment type="function">
    <text evidence="1">Multidrug efflux pump.</text>
</comment>
<comment type="subcellular location">
    <subcellularLocation>
        <location evidence="1">Cell membrane</location>
        <topology evidence="1">Multi-pass membrane protein</topology>
    </subcellularLocation>
</comment>
<comment type="similarity">
    <text evidence="3">Belongs to the multi antimicrobial extrusion (MATE) (TC 2.A.66.1) family.</text>
</comment>
<accession>O31855</accession>
<protein>
    <recommendedName>
        <fullName>Probable multidrug resistance protein NorM</fullName>
    </recommendedName>
    <alternativeName>
        <fullName>Multidrug-efflux transporter</fullName>
    </alternativeName>
</protein>
<organism>
    <name type="scientific">Bacillus subtilis (strain 168)</name>
    <dbReference type="NCBI Taxonomy" id="224308"/>
    <lineage>
        <taxon>Bacteria</taxon>
        <taxon>Bacillati</taxon>
        <taxon>Bacillota</taxon>
        <taxon>Bacilli</taxon>
        <taxon>Bacillales</taxon>
        <taxon>Bacillaceae</taxon>
        <taxon>Bacillus</taxon>
    </lineage>
</organism>
<gene>
    <name type="primary">norM</name>
    <name type="synonym">yojI</name>
    <name type="ordered locus">BSU19440</name>
</gene>
<keyword id="KW-0050">Antiport</keyword>
<keyword id="KW-1003">Cell membrane</keyword>
<keyword id="KW-0406">Ion transport</keyword>
<keyword id="KW-0472">Membrane</keyword>
<keyword id="KW-1185">Reference proteome</keyword>
<keyword id="KW-0812">Transmembrane</keyword>
<keyword id="KW-1133">Transmembrane helix</keyword>
<keyword id="KW-0813">Transport</keyword>
<dbReference type="EMBL" id="AF026147">
    <property type="protein sequence ID" value="AAC17857.1"/>
    <property type="molecule type" value="Genomic_DNA"/>
</dbReference>
<dbReference type="EMBL" id="AL009126">
    <property type="protein sequence ID" value="CAB13836.1"/>
    <property type="molecule type" value="Genomic_DNA"/>
</dbReference>
<dbReference type="PIR" id="F69906">
    <property type="entry name" value="F69906"/>
</dbReference>
<dbReference type="RefSeq" id="WP_003231218.1">
    <property type="nucleotide sequence ID" value="NZ_OZ025638.1"/>
</dbReference>
<dbReference type="SMR" id="O31855"/>
<dbReference type="FunCoup" id="O31855">
    <property type="interactions" value="343"/>
</dbReference>
<dbReference type="STRING" id="224308.BSU19440"/>
<dbReference type="PaxDb" id="224308-BSU19440"/>
<dbReference type="DNASU" id="939592"/>
<dbReference type="EnsemblBacteria" id="CAB13836">
    <property type="protein sequence ID" value="CAB13836"/>
    <property type="gene ID" value="BSU_19440"/>
</dbReference>
<dbReference type="GeneID" id="939592"/>
<dbReference type="KEGG" id="bsu:BSU19440"/>
<dbReference type="PATRIC" id="fig|224308.179.peg.2126"/>
<dbReference type="eggNOG" id="COG0534">
    <property type="taxonomic scope" value="Bacteria"/>
</dbReference>
<dbReference type="InParanoid" id="O31855"/>
<dbReference type="OrthoDB" id="9780160at2"/>
<dbReference type="PhylomeDB" id="O31855"/>
<dbReference type="BioCyc" id="BSUB:BSU19440-MONOMER"/>
<dbReference type="Proteomes" id="UP000001570">
    <property type="component" value="Chromosome"/>
</dbReference>
<dbReference type="GO" id="GO:0016020">
    <property type="term" value="C:membrane"/>
    <property type="evidence" value="ECO:0000318"/>
    <property type="project" value="GO_Central"/>
</dbReference>
<dbReference type="GO" id="GO:0005886">
    <property type="term" value="C:plasma membrane"/>
    <property type="evidence" value="ECO:0007669"/>
    <property type="project" value="UniProtKB-SubCell"/>
</dbReference>
<dbReference type="GO" id="GO:0015297">
    <property type="term" value="F:antiporter activity"/>
    <property type="evidence" value="ECO:0007669"/>
    <property type="project" value="UniProtKB-KW"/>
</dbReference>
<dbReference type="GO" id="GO:0042910">
    <property type="term" value="F:xenobiotic transmembrane transporter activity"/>
    <property type="evidence" value="ECO:0000318"/>
    <property type="project" value="GO_Central"/>
</dbReference>
<dbReference type="GO" id="GO:0006811">
    <property type="term" value="P:monoatomic ion transport"/>
    <property type="evidence" value="ECO:0007669"/>
    <property type="project" value="UniProtKB-KW"/>
</dbReference>
<dbReference type="GO" id="GO:0046677">
    <property type="term" value="P:response to antibiotic"/>
    <property type="evidence" value="ECO:0000318"/>
    <property type="project" value="GO_Central"/>
</dbReference>
<dbReference type="CDD" id="cd13131">
    <property type="entry name" value="MATE_NorM_like"/>
    <property type="match status" value="1"/>
</dbReference>
<dbReference type="InterPro" id="IPR002528">
    <property type="entry name" value="MATE_fam"/>
</dbReference>
<dbReference type="InterPro" id="IPR050222">
    <property type="entry name" value="MATE_MdtK"/>
</dbReference>
<dbReference type="InterPro" id="IPR048279">
    <property type="entry name" value="MdtK-like"/>
</dbReference>
<dbReference type="NCBIfam" id="TIGR00797">
    <property type="entry name" value="matE"/>
    <property type="match status" value="1"/>
</dbReference>
<dbReference type="PANTHER" id="PTHR43298:SF2">
    <property type="entry name" value="FMN_FAD EXPORTER YEEO-RELATED"/>
    <property type="match status" value="1"/>
</dbReference>
<dbReference type="PANTHER" id="PTHR43298">
    <property type="entry name" value="MULTIDRUG RESISTANCE PROTEIN NORM-RELATED"/>
    <property type="match status" value="1"/>
</dbReference>
<dbReference type="Pfam" id="PF01554">
    <property type="entry name" value="MatE"/>
    <property type="match status" value="2"/>
</dbReference>
<dbReference type="PIRSF" id="PIRSF006603">
    <property type="entry name" value="DinF"/>
    <property type="match status" value="1"/>
</dbReference>